<dbReference type="EMBL" id="AF110520">
    <property type="protein sequence ID" value="AAC97969.1"/>
    <property type="molecule type" value="Genomic_DNA"/>
</dbReference>
<dbReference type="EMBL" id="AF528162">
    <property type="protein sequence ID" value="AAO17374.1"/>
    <property type="molecule type" value="Genomic_DNA"/>
</dbReference>
<dbReference type="EMBL" id="AK021187">
    <property type="protein sequence ID" value="BAB32321.1"/>
    <property type="molecule type" value="mRNA"/>
</dbReference>
<dbReference type="EMBL" id="AK078151">
    <property type="protein sequence ID" value="BAC37150.1"/>
    <property type="molecule type" value="mRNA"/>
</dbReference>
<dbReference type="EMBL" id="AK088189">
    <property type="protein sequence ID" value="BAC40198.1"/>
    <property type="molecule type" value="mRNA"/>
</dbReference>
<dbReference type="EMBL" id="AK131655">
    <property type="protein sequence ID" value="BAE20743.1"/>
    <property type="molecule type" value="mRNA"/>
</dbReference>
<dbReference type="EMBL" id="AK140204">
    <property type="protein sequence ID" value="BAE24278.1"/>
    <property type="molecule type" value="mRNA"/>
</dbReference>
<dbReference type="EMBL" id="CH466660">
    <property type="protein sequence ID" value="EDL10217.1"/>
    <property type="molecule type" value="Genomic_DNA"/>
</dbReference>
<dbReference type="EMBL" id="BC026888">
    <property type="protein sequence ID" value="AAH26888.1"/>
    <property type="molecule type" value="mRNA"/>
</dbReference>
<dbReference type="EMBL" id="AJ560661">
    <property type="protein sequence ID" value="CAD91188.1"/>
    <property type="status" value="ALT_SEQ"/>
    <property type="molecule type" value="Genomic_DNA"/>
</dbReference>
<dbReference type="EMBL" id="AJ560659">
    <property type="protein sequence ID" value="CAD91188.1"/>
    <property type="status" value="JOINED"/>
    <property type="molecule type" value="Genomic_DNA"/>
</dbReference>
<dbReference type="EMBL" id="AJ560660">
    <property type="protein sequence ID" value="CAD91188.1"/>
    <property type="status" value="JOINED"/>
    <property type="molecule type" value="Genomic_DNA"/>
</dbReference>
<dbReference type="CCDS" id="CCDS28632.1">
    <molecule id="Q9Z1P5-1"/>
</dbReference>
<dbReference type="CCDS" id="CCDS79533.1">
    <molecule id="Q9Z1P5-2"/>
</dbReference>
<dbReference type="RefSeq" id="NP_001292098.1">
    <molecule id="Q9Z1P5-2"/>
    <property type="nucleotide sequence ID" value="NM_001305169.1"/>
</dbReference>
<dbReference type="RefSeq" id="NP_062294.3">
    <molecule id="Q9Z1P5-1"/>
    <property type="nucleotide sequence ID" value="NM_019421.3"/>
</dbReference>
<dbReference type="BioGRID" id="207609">
    <property type="interactions" value="2"/>
</dbReference>
<dbReference type="FunCoup" id="Q9Z1P5">
    <property type="interactions" value="631"/>
</dbReference>
<dbReference type="STRING" id="10090.ENSMUSP00000002379"/>
<dbReference type="GlyCosmos" id="Q9Z1P5">
    <property type="glycosylation" value="2 sites, No reported glycans"/>
</dbReference>
<dbReference type="GlyGen" id="Q9Z1P5">
    <property type="glycosylation" value="4 sites, 2 N-linked glycans (3 sites)"/>
</dbReference>
<dbReference type="iPTMnet" id="Q9Z1P5"/>
<dbReference type="PhosphoSitePlus" id="Q9Z1P5"/>
<dbReference type="PaxDb" id="10090-ENSMUSP00000002379"/>
<dbReference type="PeptideAtlas" id="Q9Z1P5"/>
<dbReference type="ProteomicsDB" id="279965">
    <molecule id="Q9Z1P5-1"/>
</dbReference>
<dbReference type="ProteomicsDB" id="279966">
    <molecule id="Q9Z1P5-2"/>
</dbReference>
<dbReference type="Antibodypedia" id="3048">
    <property type="antibodies" value="163 antibodies from 25 providers"/>
</dbReference>
<dbReference type="DNASU" id="54219"/>
<dbReference type="Ensembl" id="ENSMUST00000002379.15">
    <molecule id="Q9Z1P5-1"/>
    <property type="protein sequence ID" value="ENSMUSP00000002379.9"/>
    <property type="gene ID" value="ENSMUSG00000002308.17"/>
</dbReference>
<dbReference type="Ensembl" id="ENSMUST00000087559.8">
    <molecule id="Q9Z1P5-2"/>
    <property type="protein sequence ID" value="ENSMUSP00000084839.8"/>
    <property type="gene ID" value="ENSMUSG00000002308.17"/>
</dbReference>
<dbReference type="GeneID" id="54219"/>
<dbReference type="KEGG" id="mmu:54219"/>
<dbReference type="UCSC" id="uc008bzv.1">
    <molecule id="Q9Z1P5-1"/>
    <property type="organism name" value="mouse"/>
</dbReference>
<dbReference type="UCSC" id="uc056zej.1">
    <molecule id="Q9Z1P5-2"/>
    <property type="organism name" value="mouse"/>
</dbReference>
<dbReference type="AGR" id="MGI:1860083"/>
<dbReference type="CTD" id="51293"/>
<dbReference type="MGI" id="MGI:1860083">
    <property type="gene designation" value="Cd320"/>
</dbReference>
<dbReference type="VEuPathDB" id="HostDB:ENSMUSG00000002308"/>
<dbReference type="eggNOG" id="KOG1215">
    <property type="taxonomic scope" value="Eukaryota"/>
</dbReference>
<dbReference type="GeneTree" id="ENSGT00730000111436"/>
<dbReference type="HOGENOM" id="CLU_094249_0_0_1"/>
<dbReference type="InParanoid" id="Q9Z1P5"/>
<dbReference type="OMA" id="IKPCAQD"/>
<dbReference type="OrthoDB" id="9990982at2759"/>
<dbReference type="PhylomeDB" id="Q9Z1P5"/>
<dbReference type="TreeFam" id="TF337215"/>
<dbReference type="Reactome" id="R-MMU-9758890">
    <property type="pathway name" value="Transport of RCbl within the body"/>
</dbReference>
<dbReference type="BioGRID-ORCS" id="54219">
    <property type="hits" value="5 hits in 81 CRISPR screens"/>
</dbReference>
<dbReference type="ChiTaRS" id="Cd320">
    <property type="organism name" value="mouse"/>
</dbReference>
<dbReference type="PRO" id="PR:Q9Z1P5"/>
<dbReference type="Proteomes" id="UP000000589">
    <property type="component" value="Chromosome 17"/>
</dbReference>
<dbReference type="RNAct" id="Q9Z1P5">
    <property type="molecule type" value="protein"/>
</dbReference>
<dbReference type="Bgee" id="ENSMUSG00000002308">
    <property type="expression patterns" value="Expressed in placenta labyrinth and 248 other cell types or tissues"/>
</dbReference>
<dbReference type="GO" id="GO:0005783">
    <property type="term" value="C:endoplasmic reticulum"/>
    <property type="evidence" value="ECO:0007669"/>
    <property type="project" value="Ensembl"/>
</dbReference>
<dbReference type="GO" id="GO:0005886">
    <property type="term" value="C:plasma membrane"/>
    <property type="evidence" value="ECO:0000315"/>
    <property type="project" value="MGI"/>
</dbReference>
<dbReference type="GO" id="GO:0005509">
    <property type="term" value="F:calcium ion binding"/>
    <property type="evidence" value="ECO:0000250"/>
    <property type="project" value="UniProtKB"/>
</dbReference>
<dbReference type="GO" id="GO:0038024">
    <property type="term" value="F:cargo receptor activity"/>
    <property type="evidence" value="ECO:0000315"/>
    <property type="project" value="MGI"/>
</dbReference>
<dbReference type="GO" id="GO:0031419">
    <property type="term" value="F:cobalamin binding"/>
    <property type="evidence" value="ECO:0000266"/>
    <property type="project" value="MGI"/>
</dbReference>
<dbReference type="GO" id="GO:0008083">
    <property type="term" value="F:growth factor activity"/>
    <property type="evidence" value="ECO:0007669"/>
    <property type="project" value="UniProtKB-KW"/>
</dbReference>
<dbReference type="GO" id="GO:0031296">
    <property type="term" value="P:B cell costimulation"/>
    <property type="evidence" value="ECO:0000250"/>
    <property type="project" value="UniProtKB"/>
</dbReference>
<dbReference type="GO" id="GO:0015889">
    <property type="term" value="P:cobalamin transport"/>
    <property type="evidence" value="ECO:0000315"/>
    <property type="project" value="MGI"/>
</dbReference>
<dbReference type="GO" id="GO:0030890">
    <property type="term" value="P:positive regulation of B cell proliferation"/>
    <property type="evidence" value="ECO:0000250"/>
    <property type="project" value="UniProtKB"/>
</dbReference>
<dbReference type="GO" id="GO:0030656">
    <property type="term" value="P:regulation of vitamin metabolic process"/>
    <property type="evidence" value="ECO:0000315"/>
    <property type="project" value="MGI"/>
</dbReference>
<dbReference type="CDD" id="cd00112">
    <property type="entry name" value="LDLa"/>
    <property type="match status" value="2"/>
</dbReference>
<dbReference type="FunFam" id="4.10.400.10:FF:000002">
    <property type="entry name" value="Low-density lipoprotein receptor-related protein 1"/>
    <property type="match status" value="1"/>
</dbReference>
<dbReference type="Gene3D" id="4.10.400.10">
    <property type="entry name" value="Low-density Lipoprotein Receptor"/>
    <property type="match status" value="2"/>
</dbReference>
<dbReference type="InterPro" id="IPR036055">
    <property type="entry name" value="LDL_receptor-like_sf"/>
</dbReference>
<dbReference type="InterPro" id="IPR050685">
    <property type="entry name" value="LDLR"/>
</dbReference>
<dbReference type="InterPro" id="IPR023415">
    <property type="entry name" value="LDLR_class-A_CS"/>
</dbReference>
<dbReference type="InterPro" id="IPR002172">
    <property type="entry name" value="LDrepeatLR_classA_rpt"/>
</dbReference>
<dbReference type="PANTHER" id="PTHR24270:SF27">
    <property type="entry name" value="CD320 ANTIGEN"/>
    <property type="match status" value="1"/>
</dbReference>
<dbReference type="PANTHER" id="PTHR24270">
    <property type="entry name" value="LOW-DENSITY LIPOPROTEIN RECEPTOR-RELATED"/>
    <property type="match status" value="1"/>
</dbReference>
<dbReference type="Pfam" id="PF00057">
    <property type="entry name" value="Ldl_recept_a"/>
    <property type="match status" value="2"/>
</dbReference>
<dbReference type="PRINTS" id="PR00261">
    <property type="entry name" value="LDLRECEPTOR"/>
</dbReference>
<dbReference type="SMART" id="SM00192">
    <property type="entry name" value="LDLa"/>
    <property type="match status" value="2"/>
</dbReference>
<dbReference type="SUPFAM" id="SSF57424">
    <property type="entry name" value="LDL receptor-like module"/>
    <property type="match status" value="2"/>
</dbReference>
<dbReference type="PROSITE" id="PS01209">
    <property type="entry name" value="LDLRA_1"/>
    <property type="match status" value="2"/>
</dbReference>
<dbReference type="PROSITE" id="PS50068">
    <property type="entry name" value="LDLRA_2"/>
    <property type="match status" value="2"/>
</dbReference>
<reference key="1">
    <citation type="submission" date="1998-12" db="EMBL/GenBank/DDBJ databases">
        <title>Sequence of the mouse major histocompatibility complex class II region.</title>
        <authorList>
            <person name="Rowen L."/>
            <person name="Qin S."/>
            <person name="Madan A."/>
            <person name="Loretz C."/>
            <person name="Hall J."/>
            <person name="James R."/>
            <person name="Dors M."/>
            <person name="Shaffer T."/>
            <person name="Abbasi N."/>
            <person name="Ratcliffe A."/>
            <person name="Dickhoff R."/>
            <person name="Lasky S."/>
            <person name="Hood L."/>
        </authorList>
    </citation>
    <scope>NUCLEOTIDE SEQUENCE [LARGE SCALE GENOMIC DNA]</scope>
    <source>
        <strain>129/SvJ</strain>
    </source>
</reference>
<reference key="2">
    <citation type="submission" date="2002-07" db="EMBL/GenBank/DDBJ databases">
        <title>Genomic sequence analysis in the mouse T-complex region.</title>
        <authorList>
            <person name="Nagaraja R."/>
            <person name="Brathwaite M.E."/>
            <person name="Abe K."/>
        </authorList>
    </citation>
    <scope>NUCLEOTIDE SEQUENCE [LARGE SCALE GENOMIC DNA]</scope>
    <source>
        <strain>129/Sv</strain>
    </source>
</reference>
<reference key="3">
    <citation type="journal article" date="2005" name="Science">
        <title>The transcriptional landscape of the mammalian genome.</title>
        <authorList>
            <person name="Carninci P."/>
            <person name="Kasukawa T."/>
            <person name="Katayama S."/>
            <person name="Gough J."/>
            <person name="Frith M.C."/>
            <person name="Maeda N."/>
            <person name="Oyama R."/>
            <person name="Ravasi T."/>
            <person name="Lenhard B."/>
            <person name="Wells C."/>
            <person name="Kodzius R."/>
            <person name="Shimokawa K."/>
            <person name="Bajic V.B."/>
            <person name="Brenner S.E."/>
            <person name="Batalov S."/>
            <person name="Forrest A.R."/>
            <person name="Zavolan M."/>
            <person name="Davis M.J."/>
            <person name="Wilming L.G."/>
            <person name="Aidinis V."/>
            <person name="Allen J.E."/>
            <person name="Ambesi-Impiombato A."/>
            <person name="Apweiler R."/>
            <person name="Aturaliya R.N."/>
            <person name="Bailey T.L."/>
            <person name="Bansal M."/>
            <person name="Baxter L."/>
            <person name="Beisel K.W."/>
            <person name="Bersano T."/>
            <person name="Bono H."/>
            <person name="Chalk A.M."/>
            <person name="Chiu K.P."/>
            <person name="Choudhary V."/>
            <person name="Christoffels A."/>
            <person name="Clutterbuck D.R."/>
            <person name="Crowe M.L."/>
            <person name="Dalla E."/>
            <person name="Dalrymple B.P."/>
            <person name="de Bono B."/>
            <person name="Della Gatta G."/>
            <person name="di Bernardo D."/>
            <person name="Down T."/>
            <person name="Engstrom P."/>
            <person name="Fagiolini M."/>
            <person name="Faulkner G."/>
            <person name="Fletcher C.F."/>
            <person name="Fukushima T."/>
            <person name="Furuno M."/>
            <person name="Futaki S."/>
            <person name="Gariboldi M."/>
            <person name="Georgii-Hemming P."/>
            <person name="Gingeras T.R."/>
            <person name="Gojobori T."/>
            <person name="Green R.E."/>
            <person name="Gustincich S."/>
            <person name="Harbers M."/>
            <person name="Hayashi Y."/>
            <person name="Hensch T.K."/>
            <person name="Hirokawa N."/>
            <person name="Hill D."/>
            <person name="Huminiecki L."/>
            <person name="Iacono M."/>
            <person name="Ikeo K."/>
            <person name="Iwama A."/>
            <person name="Ishikawa T."/>
            <person name="Jakt M."/>
            <person name="Kanapin A."/>
            <person name="Katoh M."/>
            <person name="Kawasawa Y."/>
            <person name="Kelso J."/>
            <person name="Kitamura H."/>
            <person name="Kitano H."/>
            <person name="Kollias G."/>
            <person name="Krishnan S.P."/>
            <person name="Kruger A."/>
            <person name="Kummerfeld S.K."/>
            <person name="Kurochkin I.V."/>
            <person name="Lareau L.F."/>
            <person name="Lazarevic D."/>
            <person name="Lipovich L."/>
            <person name="Liu J."/>
            <person name="Liuni S."/>
            <person name="McWilliam S."/>
            <person name="Madan Babu M."/>
            <person name="Madera M."/>
            <person name="Marchionni L."/>
            <person name="Matsuda H."/>
            <person name="Matsuzawa S."/>
            <person name="Miki H."/>
            <person name="Mignone F."/>
            <person name="Miyake S."/>
            <person name="Morris K."/>
            <person name="Mottagui-Tabar S."/>
            <person name="Mulder N."/>
            <person name="Nakano N."/>
            <person name="Nakauchi H."/>
            <person name="Ng P."/>
            <person name="Nilsson R."/>
            <person name="Nishiguchi S."/>
            <person name="Nishikawa S."/>
            <person name="Nori F."/>
            <person name="Ohara O."/>
            <person name="Okazaki Y."/>
            <person name="Orlando V."/>
            <person name="Pang K.C."/>
            <person name="Pavan W.J."/>
            <person name="Pavesi G."/>
            <person name="Pesole G."/>
            <person name="Petrovsky N."/>
            <person name="Piazza S."/>
            <person name="Reed J."/>
            <person name="Reid J.F."/>
            <person name="Ring B.Z."/>
            <person name="Ringwald M."/>
            <person name="Rost B."/>
            <person name="Ruan Y."/>
            <person name="Salzberg S.L."/>
            <person name="Sandelin A."/>
            <person name="Schneider C."/>
            <person name="Schoenbach C."/>
            <person name="Sekiguchi K."/>
            <person name="Semple C.A."/>
            <person name="Seno S."/>
            <person name="Sessa L."/>
            <person name="Sheng Y."/>
            <person name="Shibata Y."/>
            <person name="Shimada H."/>
            <person name="Shimada K."/>
            <person name="Silva D."/>
            <person name="Sinclair B."/>
            <person name="Sperling S."/>
            <person name="Stupka E."/>
            <person name="Sugiura K."/>
            <person name="Sultana R."/>
            <person name="Takenaka Y."/>
            <person name="Taki K."/>
            <person name="Tammoja K."/>
            <person name="Tan S.L."/>
            <person name="Tang S."/>
            <person name="Taylor M.S."/>
            <person name="Tegner J."/>
            <person name="Teichmann S.A."/>
            <person name="Ueda H.R."/>
            <person name="van Nimwegen E."/>
            <person name="Verardo R."/>
            <person name="Wei C.L."/>
            <person name="Yagi K."/>
            <person name="Yamanishi H."/>
            <person name="Zabarovsky E."/>
            <person name="Zhu S."/>
            <person name="Zimmer A."/>
            <person name="Hide W."/>
            <person name="Bult C."/>
            <person name="Grimmond S.M."/>
            <person name="Teasdale R.D."/>
            <person name="Liu E.T."/>
            <person name="Brusic V."/>
            <person name="Quackenbush J."/>
            <person name="Wahlestedt C."/>
            <person name="Mattick J.S."/>
            <person name="Hume D.A."/>
            <person name="Kai C."/>
            <person name="Sasaki D."/>
            <person name="Tomaru Y."/>
            <person name="Fukuda S."/>
            <person name="Kanamori-Katayama M."/>
            <person name="Suzuki M."/>
            <person name="Aoki J."/>
            <person name="Arakawa T."/>
            <person name="Iida J."/>
            <person name="Imamura K."/>
            <person name="Itoh M."/>
            <person name="Kato T."/>
            <person name="Kawaji H."/>
            <person name="Kawagashira N."/>
            <person name="Kawashima T."/>
            <person name="Kojima M."/>
            <person name="Kondo S."/>
            <person name="Konno H."/>
            <person name="Nakano K."/>
            <person name="Ninomiya N."/>
            <person name="Nishio T."/>
            <person name="Okada M."/>
            <person name="Plessy C."/>
            <person name="Shibata K."/>
            <person name="Shiraki T."/>
            <person name="Suzuki S."/>
            <person name="Tagami M."/>
            <person name="Waki K."/>
            <person name="Watahiki A."/>
            <person name="Okamura-Oho Y."/>
            <person name="Suzuki H."/>
            <person name="Kawai J."/>
            <person name="Hayashizaki Y."/>
        </authorList>
    </citation>
    <scope>NUCLEOTIDE SEQUENCE [LARGE SCALE MRNA] (ISOFORMS 1 AND 2)</scope>
    <source>
        <strain>C57BL/6J</strain>
        <strain>NOD</strain>
        <tissue>Corpora quadrigemina</tissue>
        <tissue>Medulla oblongata</tissue>
        <tissue>Placenta</tissue>
        <tissue>Thymus</tissue>
    </source>
</reference>
<reference key="4">
    <citation type="submission" date="2005-07" db="EMBL/GenBank/DDBJ databases">
        <authorList>
            <person name="Mural R.J."/>
            <person name="Adams M.D."/>
            <person name="Myers E.W."/>
            <person name="Smith H.O."/>
            <person name="Venter J.C."/>
        </authorList>
    </citation>
    <scope>NUCLEOTIDE SEQUENCE [LARGE SCALE GENOMIC DNA]</scope>
</reference>
<reference key="5">
    <citation type="journal article" date="2004" name="Genome Res.">
        <title>The status, quality, and expansion of the NIH full-length cDNA project: the Mammalian Gene Collection (MGC).</title>
        <authorList>
            <consortium name="The MGC Project Team"/>
        </authorList>
    </citation>
    <scope>NUCLEOTIDE SEQUENCE [LARGE SCALE MRNA] (ISOFORM 1)</scope>
    <source>
        <strain>Czech II</strain>
        <tissue>Mammary tumor</tissue>
    </source>
</reference>
<reference key="6">
    <citation type="submission" date="2003-05" db="EMBL/GenBank/DDBJ databases">
        <title>Fifteen gene-associated SNPs within the MHC region on mouse chromosome 17.</title>
        <authorList>
            <person name="Kierstein S."/>
            <person name="Lundstroem C."/>
            <person name="Iraqi F."/>
            <person name="Gibson J."/>
        </authorList>
    </citation>
    <scope>NUCLEOTIDE SEQUENCE [GENOMIC DNA] OF 1-213</scope>
    <source>
        <strain>A/J</strain>
    </source>
</reference>
<keyword id="KW-0025">Alternative splicing</keyword>
<keyword id="KW-1003">Cell membrane</keyword>
<keyword id="KW-1015">Disulfide bond</keyword>
<keyword id="KW-0325">Glycoprotein</keyword>
<keyword id="KW-0339">Growth factor</keyword>
<keyword id="KW-0472">Membrane</keyword>
<keyword id="KW-0479">Metal-binding</keyword>
<keyword id="KW-1185">Reference proteome</keyword>
<keyword id="KW-0677">Repeat</keyword>
<keyword id="KW-0732">Signal</keyword>
<keyword id="KW-0812">Transmembrane</keyword>
<keyword id="KW-1133">Transmembrane helix</keyword>
<name>CD320_MOUSE</name>
<gene>
    <name type="primary">Cd320</name>
</gene>
<accession>Q9Z1P5</accession>
<accession>Q3V2Q4</accession>
<accession>Q7TSW0</accession>
<accession>Q8C2Q4</accession>
<accession>Q9CWC2</accession>
<comment type="function">
    <text evidence="1">Receptor for transcobalamin saturated with cobalamin (TCbl). Plays an important role in cobalamin uptake. Plasma membrane protein that is expressed on follicular dendritic cells (FDC) and mediates interaction with germinal center B cells. Functions as a costimulator to promote B cell responses to antigenic stimuli; promotes B cell differentiation and proliferation. Germinal center-B (GC-B) cells differentiate into memory B-cells and plasma cells (PC) through interaction with T-cells and follicular dendritic cells (FDC). CD320 augments the proliferation of PC precursors generated by IL-10.</text>
</comment>
<comment type="subunit">
    <text evidence="1">Interacts (via LDL-receptor class A domains) with TCN2.</text>
</comment>
<comment type="subcellular location">
    <subcellularLocation>
        <location evidence="1">Cell membrane</location>
        <topology evidence="1">Single-pass type I membrane protein</topology>
    </subcellularLocation>
</comment>
<comment type="alternative products">
    <event type="alternative splicing"/>
    <isoform>
        <id>Q9Z1P5-1</id>
        <name>1</name>
        <sequence type="displayed"/>
    </isoform>
    <isoform>
        <id>Q9Z1P5-2</id>
        <name>2</name>
        <sequence type="described" ref="VSP_035723"/>
    </isoform>
</comment>
<comment type="sequence caution" evidence="5">
    <conflict type="miscellaneous discrepancy">
        <sequence resource="EMBL-CDS" id="CAD91188"/>
    </conflict>
</comment>
<sequence length="260" mass="27739">MARGGAGRAVALGLVLRLLFGLRTGLEAAPAPAHTRVQVSGSRADSCPTDTFQCLTSGYCVPLSWRCDGDQDCSDGSDEEDCRIESCAQNGQCQPQSALPCSCDNISGCSDVSDKNLNCSRPPCQESELHCILDDVCIPHTWRCDGHPDCLDSSDELSCDTDTEIDKIFQEENATTTRISTTMENETSFRNVTFTSAGDSSRNPSAYGVIAAAGVLSAILVSATLLILLRLRGQGYLPPPGLLVAVKESLLLSERKTSLI</sequence>
<proteinExistence type="evidence at transcript level"/>
<evidence type="ECO:0000250" key="1">
    <source>
        <dbReference type="UniProtKB" id="Q9NPF0"/>
    </source>
</evidence>
<evidence type="ECO:0000255" key="2"/>
<evidence type="ECO:0000255" key="3">
    <source>
        <dbReference type="PROSITE-ProRule" id="PRU00124"/>
    </source>
</evidence>
<evidence type="ECO:0000303" key="4">
    <source>
    </source>
</evidence>
<evidence type="ECO:0000305" key="5"/>
<feature type="signal peptide" evidence="2">
    <location>
        <begin position="1"/>
        <end position="28"/>
    </location>
</feature>
<feature type="chain" id="PRO_0000354052" description="CD320 antigen">
    <location>
        <begin position="29"/>
        <end position="260"/>
    </location>
</feature>
<feature type="topological domain" description="Extracellular" evidence="2">
    <location>
        <begin position="29"/>
        <end position="208"/>
    </location>
</feature>
<feature type="transmembrane region" description="Helical" evidence="2">
    <location>
        <begin position="209"/>
        <end position="229"/>
    </location>
</feature>
<feature type="topological domain" description="Cytoplasmic" evidence="2">
    <location>
        <begin position="230"/>
        <end position="260"/>
    </location>
</feature>
<feature type="domain" description="LDL-receptor class A 1" evidence="3">
    <location>
        <begin position="46"/>
        <end position="83"/>
    </location>
</feature>
<feature type="domain" description="LDL-receptor class A 2" evidence="3">
    <location>
        <begin position="123"/>
        <end position="160"/>
    </location>
</feature>
<feature type="binding site" evidence="1">
    <location>
        <position position="65"/>
    </location>
    <ligand>
        <name>Ca(2+)</name>
        <dbReference type="ChEBI" id="CHEBI:29108"/>
        <label>1</label>
    </ligand>
</feature>
<feature type="binding site" evidence="1">
    <location>
        <position position="68"/>
    </location>
    <ligand>
        <name>Ca(2+)</name>
        <dbReference type="ChEBI" id="CHEBI:29108"/>
        <label>1</label>
    </ligand>
</feature>
<feature type="binding site" evidence="1">
    <location>
        <position position="70"/>
    </location>
    <ligand>
        <name>Ca(2+)</name>
        <dbReference type="ChEBI" id="CHEBI:29108"/>
        <label>1</label>
    </ligand>
</feature>
<feature type="binding site" evidence="1">
    <location>
        <position position="72"/>
    </location>
    <ligand>
        <name>Ca(2+)</name>
        <dbReference type="ChEBI" id="CHEBI:29108"/>
        <label>1</label>
    </ligand>
</feature>
<feature type="binding site" evidence="1">
    <location>
        <position position="78"/>
    </location>
    <ligand>
        <name>Ca(2+)</name>
        <dbReference type="ChEBI" id="CHEBI:29108"/>
        <label>1</label>
    </ligand>
</feature>
<feature type="binding site" evidence="1">
    <location>
        <position position="79"/>
    </location>
    <ligand>
        <name>Ca(2+)</name>
        <dbReference type="ChEBI" id="CHEBI:29108"/>
        <label>1</label>
    </ligand>
</feature>
<feature type="binding site" evidence="1">
    <location>
        <position position="142"/>
    </location>
    <ligand>
        <name>Ca(2+)</name>
        <dbReference type="ChEBI" id="CHEBI:29108"/>
        <label>2</label>
    </ligand>
</feature>
<feature type="binding site" evidence="1">
    <location>
        <position position="145"/>
    </location>
    <ligand>
        <name>Ca(2+)</name>
        <dbReference type="ChEBI" id="CHEBI:29108"/>
        <label>2</label>
    </ligand>
</feature>
<feature type="binding site" evidence="1">
    <location>
        <position position="147"/>
    </location>
    <ligand>
        <name>Ca(2+)</name>
        <dbReference type="ChEBI" id="CHEBI:29108"/>
        <label>2</label>
    </ligand>
</feature>
<feature type="binding site" evidence="1">
    <location>
        <position position="149"/>
    </location>
    <ligand>
        <name>Ca(2+)</name>
        <dbReference type="ChEBI" id="CHEBI:29108"/>
        <label>2</label>
    </ligand>
</feature>
<feature type="binding site" evidence="1">
    <location>
        <position position="155"/>
    </location>
    <ligand>
        <name>Ca(2+)</name>
        <dbReference type="ChEBI" id="CHEBI:29108"/>
        <label>2</label>
    </ligand>
</feature>
<feature type="binding site" evidence="1">
    <location>
        <position position="156"/>
    </location>
    <ligand>
        <name>Ca(2+)</name>
        <dbReference type="ChEBI" id="CHEBI:29108"/>
        <label>2</label>
    </ligand>
</feature>
<feature type="glycosylation site" description="N-linked (GlcNAc...) asparagine" evidence="2">
    <location>
        <position position="118"/>
    </location>
</feature>
<feature type="glycosylation site" description="N-linked (GlcNAc...) asparagine" evidence="2">
    <location>
        <position position="185"/>
    </location>
</feature>
<feature type="disulfide bond" evidence="3">
    <location>
        <begin position="47"/>
        <end position="60"/>
    </location>
</feature>
<feature type="disulfide bond" evidence="3">
    <location>
        <begin position="54"/>
        <end position="73"/>
    </location>
</feature>
<feature type="disulfide bond" evidence="3">
    <location>
        <begin position="67"/>
        <end position="82"/>
    </location>
</feature>
<feature type="disulfide bond" evidence="3">
    <location>
        <begin position="124"/>
        <end position="137"/>
    </location>
</feature>
<feature type="disulfide bond" evidence="3">
    <location>
        <begin position="131"/>
        <end position="150"/>
    </location>
</feature>
<feature type="disulfide bond" evidence="3">
    <location>
        <begin position="144"/>
        <end position="159"/>
    </location>
</feature>
<feature type="splice variant" id="VSP_035723" description="In isoform 2." evidence="4">
    <original>MARGGAGRAVALGLVLRLLFGLRTGLEAAPAPAHTRVQVS</original>
    <variation>MWAGRLLFLILTSHHAGLVTRYLLAA</variation>
    <location>
        <begin position="1"/>
        <end position="40"/>
    </location>
</feature>
<feature type="sequence conflict" description="In Ref. 3; BAB32321." evidence="5" ref="3">
    <original>S</original>
    <variation>F</variation>
    <location>
        <position position="74"/>
    </location>
</feature>
<feature type="sequence conflict" description="In Ref. 3; BAE20743." evidence="5" ref="3">
    <original>Q</original>
    <variation>H</variation>
    <location>
        <position position="125"/>
    </location>
</feature>
<feature type="sequence conflict" description="In Ref. 3; BAC40198." evidence="5" ref="3">
    <original>P</original>
    <variation>T</variation>
    <location>
        <position position="239"/>
    </location>
</feature>
<protein>
    <recommendedName>
        <fullName>CD320 antigen</fullName>
    </recommendedName>
    <alternativeName>
        <fullName>Transcobalamin receptor</fullName>
        <shortName>TCblR</shortName>
    </alternativeName>
    <cdAntigenName>CD320</cdAntigenName>
</protein>
<organism>
    <name type="scientific">Mus musculus</name>
    <name type="common">Mouse</name>
    <dbReference type="NCBI Taxonomy" id="10090"/>
    <lineage>
        <taxon>Eukaryota</taxon>
        <taxon>Metazoa</taxon>
        <taxon>Chordata</taxon>
        <taxon>Craniata</taxon>
        <taxon>Vertebrata</taxon>
        <taxon>Euteleostomi</taxon>
        <taxon>Mammalia</taxon>
        <taxon>Eutheria</taxon>
        <taxon>Euarchontoglires</taxon>
        <taxon>Glires</taxon>
        <taxon>Rodentia</taxon>
        <taxon>Myomorpha</taxon>
        <taxon>Muroidea</taxon>
        <taxon>Muridae</taxon>
        <taxon>Murinae</taxon>
        <taxon>Mus</taxon>
        <taxon>Mus</taxon>
    </lineage>
</organism>